<organism>
    <name type="scientific">Aliarcobacter butzleri (strain RM4018)</name>
    <name type="common">Arcobacter butzleri</name>
    <dbReference type="NCBI Taxonomy" id="367737"/>
    <lineage>
        <taxon>Bacteria</taxon>
        <taxon>Pseudomonadati</taxon>
        <taxon>Campylobacterota</taxon>
        <taxon>Epsilonproteobacteria</taxon>
        <taxon>Campylobacterales</taxon>
        <taxon>Arcobacteraceae</taxon>
        <taxon>Aliarcobacter</taxon>
    </lineage>
</organism>
<name>PYRB_ALIB4</name>
<proteinExistence type="inferred from homology"/>
<protein>
    <recommendedName>
        <fullName evidence="1">Aspartate carbamoyltransferase catalytic subunit</fullName>
        <ecNumber evidence="1">2.1.3.2</ecNumber>
    </recommendedName>
    <alternativeName>
        <fullName evidence="1">Aspartate transcarbamylase</fullName>
        <shortName evidence="1">ATCase</shortName>
    </alternativeName>
</protein>
<comment type="function">
    <text evidence="1">Catalyzes the condensation of carbamoyl phosphate and aspartate to form carbamoyl aspartate and inorganic phosphate, the committed step in the de novo pyrimidine nucleotide biosynthesis pathway.</text>
</comment>
<comment type="catalytic activity">
    <reaction evidence="1">
        <text>carbamoyl phosphate + L-aspartate = N-carbamoyl-L-aspartate + phosphate + H(+)</text>
        <dbReference type="Rhea" id="RHEA:20013"/>
        <dbReference type="ChEBI" id="CHEBI:15378"/>
        <dbReference type="ChEBI" id="CHEBI:29991"/>
        <dbReference type="ChEBI" id="CHEBI:32814"/>
        <dbReference type="ChEBI" id="CHEBI:43474"/>
        <dbReference type="ChEBI" id="CHEBI:58228"/>
        <dbReference type="EC" id="2.1.3.2"/>
    </reaction>
</comment>
<comment type="pathway">
    <text evidence="1">Pyrimidine metabolism; UMP biosynthesis via de novo pathway; (S)-dihydroorotate from bicarbonate: step 2/3.</text>
</comment>
<comment type="subunit">
    <text evidence="1">Heterododecamer (2C3:3R2) of six catalytic PyrB chains organized as two trimers (C3), and six regulatory PyrI chains organized as three dimers (R2).</text>
</comment>
<comment type="similarity">
    <text evidence="1">Belongs to the aspartate/ornithine carbamoyltransferase superfamily. ATCase family.</text>
</comment>
<reference key="1">
    <citation type="journal article" date="2007" name="PLoS ONE">
        <title>The complete genome sequence and analysis of the Epsilonproteobacterium Arcobacter butzleri.</title>
        <authorList>
            <person name="Miller W.G."/>
            <person name="Parker C.T."/>
            <person name="Rubenfield M."/>
            <person name="Mendz G.L."/>
            <person name="Woesten M.M.S.M."/>
            <person name="Ussery D.W."/>
            <person name="Stolz J.F."/>
            <person name="Binnewies T.T."/>
            <person name="Hallin P.F."/>
            <person name="Wang G."/>
            <person name="Malek J.A."/>
            <person name="Rogosin A."/>
            <person name="Stanker L.H."/>
            <person name="Mandrell R.E."/>
        </authorList>
    </citation>
    <scope>NUCLEOTIDE SEQUENCE [LARGE SCALE GENOMIC DNA]</scope>
    <source>
        <strain>RM4018</strain>
    </source>
</reference>
<feature type="chain" id="PRO_1000057008" description="Aspartate carbamoyltransferase catalytic subunit">
    <location>
        <begin position="1"/>
        <end position="295"/>
    </location>
</feature>
<feature type="binding site" evidence="1">
    <location>
        <position position="49"/>
    </location>
    <ligand>
        <name>carbamoyl phosphate</name>
        <dbReference type="ChEBI" id="CHEBI:58228"/>
    </ligand>
</feature>
<feature type="binding site" evidence="1">
    <location>
        <position position="50"/>
    </location>
    <ligand>
        <name>carbamoyl phosphate</name>
        <dbReference type="ChEBI" id="CHEBI:58228"/>
    </ligand>
</feature>
<feature type="binding site" evidence="1">
    <location>
        <position position="77"/>
    </location>
    <ligand>
        <name>L-aspartate</name>
        <dbReference type="ChEBI" id="CHEBI:29991"/>
    </ligand>
</feature>
<feature type="binding site" evidence="1">
    <location>
        <position position="99"/>
    </location>
    <ligand>
        <name>carbamoyl phosphate</name>
        <dbReference type="ChEBI" id="CHEBI:58228"/>
    </ligand>
</feature>
<feature type="binding site" evidence="1">
    <location>
        <position position="127"/>
    </location>
    <ligand>
        <name>carbamoyl phosphate</name>
        <dbReference type="ChEBI" id="CHEBI:58228"/>
    </ligand>
</feature>
<feature type="binding site" evidence="1">
    <location>
        <position position="130"/>
    </location>
    <ligand>
        <name>carbamoyl phosphate</name>
        <dbReference type="ChEBI" id="CHEBI:58228"/>
    </ligand>
</feature>
<feature type="binding site" evidence="1">
    <location>
        <position position="161"/>
    </location>
    <ligand>
        <name>L-aspartate</name>
        <dbReference type="ChEBI" id="CHEBI:29991"/>
    </ligand>
</feature>
<feature type="binding site" evidence="1">
    <location>
        <position position="212"/>
    </location>
    <ligand>
        <name>L-aspartate</name>
        <dbReference type="ChEBI" id="CHEBI:29991"/>
    </ligand>
</feature>
<feature type="binding site" evidence="1">
    <location>
        <position position="251"/>
    </location>
    <ligand>
        <name>carbamoyl phosphate</name>
        <dbReference type="ChEBI" id="CHEBI:58228"/>
    </ligand>
</feature>
<feature type="binding site" evidence="1">
    <location>
        <position position="252"/>
    </location>
    <ligand>
        <name>carbamoyl phosphate</name>
        <dbReference type="ChEBI" id="CHEBI:58228"/>
    </ligand>
</feature>
<dbReference type="EC" id="2.1.3.2" evidence="1"/>
<dbReference type="EMBL" id="CP000361">
    <property type="protein sequence ID" value="ABV66536.1"/>
    <property type="molecule type" value="Genomic_DNA"/>
</dbReference>
<dbReference type="RefSeq" id="WP_012012120.1">
    <property type="nucleotide sequence ID" value="NC_009850.1"/>
</dbReference>
<dbReference type="SMR" id="A8ERG2"/>
<dbReference type="STRING" id="367737.Abu_0261"/>
<dbReference type="GeneID" id="24304465"/>
<dbReference type="KEGG" id="abu:Abu_0261"/>
<dbReference type="eggNOG" id="COG0540">
    <property type="taxonomic scope" value="Bacteria"/>
</dbReference>
<dbReference type="HOGENOM" id="CLU_043846_2_0_7"/>
<dbReference type="UniPathway" id="UPA00070">
    <property type="reaction ID" value="UER00116"/>
</dbReference>
<dbReference type="Proteomes" id="UP000001136">
    <property type="component" value="Chromosome"/>
</dbReference>
<dbReference type="GO" id="GO:0005829">
    <property type="term" value="C:cytosol"/>
    <property type="evidence" value="ECO:0007669"/>
    <property type="project" value="TreeGrafter"/>
</dbReference>
<dbReference type="GO" id="GO:0016597">
    <property type="term" value="F:amino acid binding"/>
    <property type="evidence" value="ECO:0007669"/>
    <property type="project" value="InterPro"/>
</dbReference>
<dbReference type="GO" id="GO:0004070">
    <property type="term" value="F:aspartate carbamoyltransferase activity"/>
    <property type="evidence" value="ECO:0007669"/>
    <property type="project" value="UniProtKB-UniRule"/>
</dbReference>
<dbReference type="GO" id="GO:0006207">
    <property type="term" value="P:'de novo' pyrimidine nucleobase biosynthetic process"/>
    <property type="evidence" value="ECO:0007669"/>
    <property type="project" value="InterPro"/>
</dbReference>
<dbReference type="GO" id="GO:0044205">
    <property type="term" value="P:'de novo' UMP biosynthetic process"/>
    <property type="evidence" value="ECO:0007669"/>
    <property type="project" value="UniProtKB-UniRule"/>
</dbReference>
<dbReference type="GO" id="GO:0006520">
    <property type="term" value="P:amino acid metabolic process"/>
    <property type="evidence" value="ECO:0007669"/>
    <property type="project" value="InterPro"/>
</dbReference>
<dbReference type="Gene3D" id="3.40.50.1370">
    <property type="entry name" value="Aspartate/ornithine carbamoyltransferase"/>
    <property type="match status" value="2"/>
</dbReference>
<dbReference type="HAMAP" id="MF_00001">
    <property type="entry name" value="Asp_carb_tr"/>
    <property type="match status" value="1"/>
</dbReference>
<dbReference type="InterPro" id="IPR006132">
    <property type="entry name" value="Asp/Orn_carbamoyltranf_P-bd"/>
</dbReference>
<dbReference type="InterPro" id="IPR006130">
    <property type="entry name" value="Asp/Orn_carbamoylTrfase"/>
</dbReference>
<dbReference type="InterPro" id="IPR036901">
    <property type="entry name" value="Asp/Orn_carbamoylTrfase_sf"/>
</dbReference>
<dbReference type="InterPro" id="IPR002082">
    <property type="entry name" value="Asp_carbamoyltransf"/>
</dbReference>
<dbReference type="InterPro" id="IPR006131">
    <property type="entry name" value="Asp_carbamoyltransf_Asp/Orn-bd"/>
</dbReference>
<dbReference type="NCBIfam" id="TIGR00670">
    <property type="entry name" value="asp_carb_tr"/>
    <property type="match status" value="1"/>
</dbReference>
<dbReference type="NCBIfam" id="NF002032">
    <property type="entry name" value="PRK00856.1"/>
    <property type="match status" value="1"/>
</dbReference>
<dbReference type="PANTHER" id="PTHR45753:SF6">
    <property type="entry name" value="ASPARTATE CARBAMOYLTRANSFERASE"/>
    <property type="match status" value="1"/>
</dbReference>
<dbReference type="PANTHER" id="PTHR45753">
    <property type="entry name" value="ORNITHINE CARBAMOYLTRANSFERASE, MITOCHONDRIAL"/>
    <property type="match status" value="1"/>
</dbReference>
<dbReference type="Pfam" id="PF00185">
    <property type="entry name" value="OTCace"/>
    <property type="match status" value="1"/>
</dbReference>
<dbReference type="Pfam" id="PF02729">
    <property type="entry name" value="OTCace_N"/>
    <property type="match status" value="1"/>
</dbReference>
<dbReference type="PRINTS" id="PR00100">
    <property type="entry name" value="AOTCASE"/>
</dbReference>
<dbReference type="PRINTS" id="PR00101">
    <property type="entry name" value="ATCASE"/>
</dbReference>
<dbReference type="SUPFAM" id="SSF53671">
    <property type="entry name" value="Aspartate/ornithine carbamoyltransferase"/>
    <property type="match status" value="1"/>
</dbReference>
<dbReference type="PROSITE" id="PS00097">
    <property type="entry name" value="CARBAMOYLTRANSFERASE"/>
    <property type="match status" value="1"/>
</dbReference>
<sequence length="295" mass="33236">MQHLIRTSDFTKEEILDIFEDARGFLDFKPCEILKGKIIVTLFFENSTRTRSSFEIAAKRLGAEIVNLDVGTSSTKKGETMYDTVANINAMGPDAIVIRHSECGLPESLIGYVDCPIINAGDGRHSHPTQALLDLFTIYEHFNGQTEGKKIAIVGDVRNSRVAGSNRRLLPRFGIDVNLVAPDCFKYEGNEFKQFNTIAEVIDDMDVVMSLRSQLERHNITYFESLQEYAKDFCITPELMEGRDFLLLHPGPVNRNIDISDEVLKDPRCKVLEQVRNGVAVRAAILKKLILNNKN</sequence>
<evidence type="ECO:0000255" key="1">
    <source>
        <dbReference type="HAMAP-Rule" id="MF_00001"/>
    </source>
</evidence>
<gene>
    <name evidence="1" type="primary">pyrB</name>
    <name type="ordered locus">Abu_0261</name>
</gene>
<keyword id="KW-0665">Pyrimidine biosynthesis</keyword>
<keyword id="KW-1185">Reference proteome</keyword>
<keyword id="KW-0808">Transferase</keyword>
<accession>A8ERG2</accession>